<accession>B1HPM8</accession>
<evidence type="ECO:0000255" key="1">
    <source>
        <dbReference type="HAMAP-Rule" id="MF_00391"/>
    </source>
</evidence>
<evidence type="ECO:0000256" key="2">
    <source>
        <dbReference type="SAM" id="MobiDB-lite"/>
    </source>
</evidence>
<evidence type="ECO:0000305" key="3"/>
<organism>
    <name type="scientific">Lysinibacillus sphaericus (strain C3-41)</name>
    <dbReference type="NCBI Taxonomy" id="444177"/>
    <lineage>
        <taxon>Bacteria</taxon>
        <taxon>Bacillati</taxon>
        <taxon>Bacillota</taxon>
        <taxon>Bacilli</taxon>
        <taxon>Bacillales</taxon>
        <taxon>Bacillaceae</taxon>
        <taxon>Lysinibacillus</taxon>
    </lineage>
</organism>
<keyword id="KW-0687">Ribonucleoprotein</keyword>
<keyword id="KW-0689">Ribosomal protein</keyword>
<gene>
    <name evidence="1" type="primary">rpmH</name>
    <name type="ordered locus">Bsph_4786</name>
</gene>
<name>RL34_LYSSC</name>
<comment type="similarity">
    <text evidence="1">Belongs to the bacterial ribosomal protein bL34 family.</text>
</comment>
<sequence>MKRTYQPKKRKHSKVHGFRARMSTKNGRKVLAARRRKGRKVLSA</sequence>
<proteinExistence type="inferred from homology"/>
<protein>
    <recommendedName>
        <fullName evidence="1">Large ribosomal subunit protein bL34</fullName>
    </recommendedName>
    <alternativeName>
        <fullName evidence="3">50S ribosomal protein L34</fullName>
    </alternativeName>
</protein>
<reference key="1">
    <citation type="journal article" date="2008" name="J. Bacteriol.">
        <title>Complete genome sequence of the mosquitocidal bacterium Bacillus sphaericus C3-41 and comparison with those of closely related Bacillus species.</title>
        <authorList>
            <person name="Hu X."/>
            <person name="Fan W."/>
            <person name="Han B."/>
            <person name="Liu H."/>
            <person name="Zheng D."/>
            <person name="Li Q."/>
            <person name="Dong W."/>
            <person name="Yan J."/>
            <person name="Gao M."/>
            <person name="Berry C."/>
            <person name="Yuan Z."/>
        </authorList>
    </citation>
    <scope>NUCLEOTIDE SEQUENCE [LARGE SCALE GENOMIC DNA]</scope>
    <source>
        <strain>C3-41</strain>
    </source>
</reference>
<dbReference type="EMBL" id="CP000817">
    <property type="protein sequence ID" value="ACA42230.1"/>
    <property type="molecule type" value="Genomic_DNA"/>
</dbReference>
<dbReference type="RefSeq" id="WP_004233310.1">
    <property type="nucleotide sequence ID" value="NC_010382.1"/>
</dbReference>
<dbReference type="SMR" id="B1HPM8"/>
<dbReference type="EnsemblBacteria" id="ACA42230">
    <property type="protein sequence ID" value="ACA42230"/>
    <property type="gene ID" value="Bsph_4786"/>
</dbReference>
<dbReference type="GeneID" id="96596749"/>
<dbReference type="KEGG" id="lsp:Bsph_4786"/>
<dbReference type="HOGENOM" id="CLU_129938_2_0_9"/>
<dbReference type="Proteomes" id="UP000002164">
    <property type="component" value="Chromosome"/>
</dbReference>
<dbReference type="GO" id="GO:1990904">
    <property type="term" value="C:ribonucleoprotein complex"/>
    <property type="evidence" value="ECO:0007669"/>
    <property type="project" value="UniProtKB-KW"/>
</dbReference>
<dbReference type="GO" id="GO:0005840">
    <property type="term" value="C:ribosome"/>
    <property type="evidence" value="ECO:0007669"/>
    <property type="project" value="UniProtKB-KW"/>
</dbReference>
<dbReference type="GO" id="GO:0003735">
    <property type="term" value="F:structural constituent of ribosome"/>
    <property type="evidence" value="ECO:0007669"/>
    <property type="project" value="InterPro"/>
</dbReference>
<dbReference type="GO" id="GO:0006412">
    <property type="term" value="P:translation"/>
    <property type="evidence" value="ECO:0007669"/>
    <property type="project" value="UniProtKB-UniRule"/>
</dbReference>
<dbReference type="FunFam" id="1.10.287.3980:FF:000001">
    <property type="entry name" value="Mitochondrial ribosomal protein L34"/>
    <property type="match status" value="1"/>
</dbReference>
<dbReference type="Gene3D" id="1.10.287.3980">
    <property type="match status" value="1"/>
</dbReference>
<dbReference type="HAMAP" id="MF_00391">
    <property type="entry name" value="Ribosomal_bL34"/>
    <property type="match status" value="1"/>
</dbReference>
<dbReference type="InterPro" id="IPR000271">
    <property type="entry name" value="Ribosomal_bL34"/>
</dbReference>
<dbReference type="InterPro" id="IPR020939">
    <property type="entry name" value="Ribosomal_bL34_CS"/>
</dbReference>
<dbReference type="NCBIfam" id="TIGR01030">
    <property type="entry name" value="rpmH_bact"/>
    <property type="match status" value="1"/>
</dbReference>
<dbReference type="PANTHER" id="PTHR14503:SF4">
    <property type="entry name" value="LARGE RIBOSOMAL SUBUNIT PROTEIN BL34M"/>
    <property type="match status" value="1"/>
</dbReference>
<dbReference type="PANTHER" id="PTHR14503">
    <property type="entry name" value="MITOCHONDRIAL RIBOSOMAL PROTEIN 34 FAMILY MEMBER"/>
    <property type="match status" value="1"/>
</dbReference>
<dbReference type="Pfam" id="PF00468">
    <property type="entry name" value="Ribosomal_L34"/>
    <property type="match status" value="1"/>
</dbReference>
<dbReference type="PROSITE" id="PS00784">
    <property type="entry name" value="RIBOSOMAL_L34"/>
    <property type="match status" value="1"/>
</dbReference>
<feature type="chain" id="PRO_1000196065" description="Large ribosomal subunit protein bL34">
    <location>
        <begin position="1"/>
        <end position="44"/>
    </location>
</feature>
<feature type="region of interest" description="Disordered" evidence="2">
    <location>
        <begin position="24"/>
        <end position="44"/>
    </location>
</feature>
<feature type="compositionally biased region" description="Basic residues" evidence="2">
    <location>
        <begin position="26"/>
        <end position="44"/>
    </location>
</feature>